<gene>
    <name evidence="1" type="primary">mutS</name>
    <name type="ordered locus">Dshi_3466</name>
</gene>
<name>MUTS_DINSH</name>
<feature type="chain" id="PRO_1000075555" description="DNA mismatch repair protein MutS">
    <location>
        <begin position="1"/>
        <end position="877"/>
    </location>
</feature>
<feature type="binding site" evidence="1">
    <location>
        <begin position="627"/>
        <end position="634"/>
    </location>
    <ligand>
        <name>ATP</name>
        <dbReference type="ChEBI" id="CHEBI:30616"/>
    </ligand>
</feature>
<proteinExistence type="inferred from homology"/>
<keyword id="KW-0067">ATP-binding</keyword>
<keyword id="KW-0227">DNA damage</keyword>
<keyword id="KW-0234">DNA repair</keyword>
<keyword id="KW-0238">DNA-binding</keyword>
<keyword id="KW-0547">Nucleotide-binding</keyword>
<keyword id="KW-1185">Reference proteome</keyword>
<dbReference type="EMBL" id="CP000830">
    <property type="protein sequence ID" value="ABV95199.1"/>
    <property type="molecule type" value="Genomic_DNA"/>
</dbReference>
<dbReference type="RefSeq" id="WP_012180123.1">
    <property type="nucleotide sequence ID" value="NC_009952.1"/>
</dbReference>
<dbReference type="SMR" id="A8LPD4"/>
<dbReference type="STRING" id="398580.Dshi_3466"/>
<dbReference type="KEGG" id="dsh:Dshi_3466"/>
<dbReference type="eggNOG" id="COG0249">
    <property type="taxonomic scope" value="Bacteria"/>
</dbReference>
<dbReference type="HOGENOM" id="CLU_002472_3_1_5"/>
<dbReference type="OrthoDB" id="9802448at2"/>
<dbReference type="Proteomes" id="UP000006833">
    <property type="component" value="Chromosome"/>
</dbReference>
<dbReference type="GO" id="GO:0005829">
    <property type="term" value="C:cytosol"/>
    <property type="evidence" value="ECO:0007669"/>
    <property type="project" value="TreeGrafter"/>
</dbReference>
<dbReference type="GO" id="GO:0005524">
    <property type="term" value="F:ATP binding"/>
    <property type="evidence" value="ECO:0007669"/>
    <property type="project" value="UniProtKB-UniRule"/>
</dbReference>
<dbReference type="GO" id="GO:0140664">
    <property type="term" value="F:ATP-dependent DNA damage sensor activity"/>
    <property type="evidence" value="ECO:0007669"/>
    <property type="project" value="InterPro"/>
</dbReference>
<dbReference type="GO" id="GO:0003684">
    <property type="term" value="F:damaged DNA binding"/>
    <property type="evidence" value="ECO:0007669"/>
    <property type="project" value="UniProtKB-UniRule"/>
</dbReference>
<dbReference type="GO" id="GO:0030983">
    <property type="term" value="F:mismatched DNA binding"/>
    <property type="evidence" value="ECO:0007669"/>
    <property type="project" value="InterPro"/>
</dbReference>
<dbReference type="GO" id="GO:0006298">
    <property type="term" value="P:mismatch repair"/>
    <property type="evidence" value="ECO:0007669"/>
    <property type="project" value="UniProtKB-UniRule"/>
</dbReference>
<dbReference type="CDD" id="cd03284">
    <property type="entry name" value="ABC_MutS1"/>
    <property type="match status" value="1"/>
</dbReference>
<dbReference type="FunFam" id="3.40.1170.10:FF:000001">
    <property type="entry name" value="DNA mismatch repair protein MutS"/>
    <property type="match status" value="1"/>
</dbReference>
<dbReference type="FunFam" id="3.40.50.300:FF:000870">
    <property type="entry name" value="MutS protein homolog 4"/>
    <property type="match status" value="1"/>
</dbReference>
<dbReference type="Gene3D" id="1.10.1420.10">
    <property type="match status" value="2"/>
</dbReference>
<dbReference type="Gene3D" id="6.10.140.430">
    <property type="match status" value="1"/>
</dbReference>
<dbReference type="Gene3D" id="3.40.1170.10">
    <property type="entry name" value="DNA repair protein MutS, domain I"/>
    <property type="match status" value="1"/>
</dbReference>
<dbReference type="Gene3D" id="3.30.420.110">
    <property type="entry name" value="MutS, connector domain"/>
    <property type="match status" value="1"/>
</dbReference>
<dbReference type="Gene3D" id="3.40.50.300">
    <property type="entry name" value="P-loop containing nucleotide triphosphate hydrolases"/>
    <property type="match status" value="1"/>
</dbReference>
<dbReference type="HAMAP" id="MF_00096">
    <property type="entry name" value="MutS"/>
    <property type="match status" value="1"/>
</dbReference>
<dbReference type="InterPro" id="IPR005748">
    <property type="entry name" value="DNA_mismatch_repair_MutS"/>
</dbReference>
<dbReference type="InterPro" id="IPR007695">
    <property type="entry name" value="DNA_mismatch_repair_MutS-lik_N"/>
</dbReference>
<dbReference type="InterPro" id="IPR017261">
    <property type="entry name" value="DNA_mismatch_repair_MutS/MSH"/>
</dbReference>
<dbReference type="InterPro" id="IPR000432">
    <property type="entry name" value="DNA_mismatch_repair_MutS_C"/>
</dbReference>
<dbReference type="InterPro" id="IPR007861">
    <property type="entry name" value="DNA_mismatch_repair_MutS_clamp"/>
</dbReference>
<dbReference type="InterPro" id="IPR007696">
    <property type="entry name" value="DNA_mismatch_repair_MutS_core"/>
</dbReference>
<dbReference type="InterPro" id="IPR016151">
    <property type="entry name" value="DNA_mismatch_repair_MutS_N"/>
</dbReference>
<dbReference type="InterPro" id="IPR036187">
    <property type="entry name" value="DNA_mismatch_repair_MutS_sf"/>
</dbReference>
<dbReference type="InterPro" id="IPR007860">
    <property type="entry name" value="DNA_mmatch_repair_MutS_con_dom"/>
</dbReference>
<dbReference type="InterPro" id="IPR045076">
    <property type="entry name" value="MutS"/>
</dbReference>
<dbReference type="InterPro" id="IPR036678">
    <property type="entry name" value="MutS_con_dom_sf"/>
</dbReference>
<dbReference type="InterPro" id="IPR027417">
    <property type="entry name" value="P-loop_NTPase"/>
</dbReference>
<dbReference type="NCBIfam" id="TIGR01070">
    <property type="entry name" value="mutS1"/>
    <property type="match status" value="1"/>
</dbReference>
<dbReference type="NCBIfam" id="NF003810">
    <property type="entry name" value="PRK05399.1"/>
    <property type="match status" value="1"/>
</dbReference>
<dbReference type="PANTHER" id="PTHR11361:SF34">
    <property type="entry name" value="DNA MISMATCH REPAIR PROTEIN MSH1, MITOCHONDRIAL"/>
    <property type="match status" value="1"/>
</dbReference>
<dbReference type="PANTHER" id="PTHR11361">
    <property type="entry name" value="DNA MISMATCH REPAIR PROTEIN MUTS FAMILY MEMBER"/>
    <property type="match status" value="1"/>
</dbReference>
<dbReference type="Pfam" id="PF01624">
    <property type="entry name" value="MutS_I"/>
    <property type="match status" value="1"/>
</dbReference>
<dbReference type="Pfam" id="PF05188">
    <property type="entry name" value="MutS_II"/>
    <property type="match status" value="1"/>
</dbReference>
<dbReference type="Pfam" id="PF05192">
    <property type="entry name" value="MutS_III"/>
    <property type="match status" value="1"/>
</dbReference>
<dbReference type="Pfam" id="PF05190">
    <property type="entry name" value="MutS_IV"/>
    <property type="match status" value="1"/>
</dbReference>
<dbReference type="Pfam" id="PF00488">
    <property type="entry name" value="MutS_V"/>
    <property type="match status" value="1"/>
</dbReference>
<dbReference type="PIRSF" id="PIRSF037677">
    <property type="entry name" value="DNA_mis_repair_Msh6"/>
    <property type="match status" value="1"/>
</dbReference>
<dbReference type="SMART" id="SM00534">
    <property type="entry name" value="MUTSac"/>
    <property type="match status" value="1"/>
</dbReference>
<dbReference type="SMART" id="SM00533">
    <property type="entry name" value="MUTSd"/>
    <property type="match status" value="1"/>
</dbReference>
<dbReference type="SUPFAM" id="SSF55271">
    <property type="entry name" value="DNA repair protein MutS, domain I"/>
    <property type="match status" value="1"/>
</dbReference>
<dbReference type="SUPFAM" id="SSF53150">
    <property type="entry name" value="DNA repair protein MutS, domain II"/>
    <property type="match status" value="1"/>
</dbReference>
<dbReference type="SUPFAM" id="SSF48334">
    <property type="entry name" value="DNA repair protein MutS, domain III"/>
    <property type="match status" value="1"/>
</dbReference>
<dbReference type="SUPFAM" id="SSF52540">
    <property type="entry name" value="P-loop containing nucleoside triphosphate hydrolases"/>
    <property type="match status" value="1"/>
</dbReference>
<dbReference type="PROSITE" id="PS00486">
    <property type="entry name" value="DNA_MISMATCH_REPAIR_2"/>
    <property type="match status" value="1"/>
</dbReference>
<accession>A8LPD4</accession>
<evidence type="ECO:0000255" key="1">
    <source>
        <dbReference type="HAMAP-Rule" id="MF_00096"/>
    </source>
</evidence>
<protein>
    <recommendedName>
        <fullName evidence="1">DNA mismatch repair protein MutS</fullName>
    </recommendedName>
</protein>
<comment type="function">
    <text evidence="1">This protein is involved in the repair of mismatches in DNA. It is possible that it carries out the mismatch recognition step. This protein has a weak ATPase activity.</text>
</comment>
<comment type="similarity">
    <text evidence="1">Belongs to the DNA mismatch repair MutS family.</text>
</comment>
<reference key="1">
    <citation type="journal article" date="2010" name="ISME J.">
        <title>The complete genome sequence of the algal symbiont Dinoroseobacter shibae: a hitchhiker's guide to life in the sea.</title>
        <authorList>
            <person name="Wagner-Dobler I."/>
            <person name="Ballhausen B."/>
            <person name="Berger M."/>
            <person name="Brinkhoff T."/>
            <person name="Buchholz I."/>
            <person name="Bunk B."/>
            <person name="Cypionka H."/>
            <person name="Daniel R."/>
            <person name="Drepper T."/>
            <person name="Gerdts G."/>
            <person name="Hahnke S."/>
            <person name="Han C."/>
            <person name="Jahn D."/>
            <person name="Kalhoefer D."/>
            <person name="Kiss H."/>
            <person name="Klenk H.P."/>
            <person name="Kyrpides N."/>
            <person name="Liebl W."/>
            <person name="Liesegang H."/>
            <person name="Meincke L."/>
            <person name="Pati A."/>
            <person name="Petersen J."/>
            <person name="Piekarski T."/>
            <person name="Pommerenke C."/>
            <person name="Pradella S."/>
            <person name="Pukall R."/>
            <person name="Rabus R."/>
            <person name="Stackebrandt E."/>
            <person name="Thole S."/>
            <person name="Thompson L."/>
            <person name="Tielen P."/>
            <person name="Tomasch J."/>
            <person name="von Jan M."/>
            <person name="Wanphrut N."/>
            <person name="Wichels A."/>
            <person name="Zech H."/>
            <person name="Simon M."/>
        </authorList>
    </citation>
    <scope>NUCLEOTIDE SEQUENCE [LARGE SCALE GENOMIC DNA]</scope>
    <source>
        <strain>DSM 16493 / NCIMB 14021 / DFL 12</strain>
    </source>
</reference>
<sequence>MSSKTVTPMMAQYLEIKQDHADALLFYRMGDFYEMFFDDAVEAAAALDIALTKRGKHDDADIPMCGVPVHAAEGYLLTLIRKGFRVAVCEQMEDPAEAKKRGSKSVVRREVVRLVTPGTLTEASLLEARRHNYLAAFAKVRDDSALAWVDISTGEFRVMACPAARLSVDLARLAPREVLLAEGNDLRSLVEEHEAAATELGRASFDSTAAVDRLCRLYGVADLEAFGSFERADLSAMGAIVGYLELTQKGKLPLLRKPVKERAQHGLQIDAATRRNLELTQSLSGGREGALLTVIDRTVTAQGARLLARRLASPSADLSIIRTRHEGVRYALEAPEILDTVRTALRQVPDMDRALSRLALDRGGPRDLAAIRNGLAQAATLAEALPDDALPPLWAQSKSRFFGHDALRDLLEKALIAEPPLLTRDGGFVASGYNVDLDEARQLRDEGRGVIAGMQAEYAEATGIASLKVKHNNVLGYFIETTATHADKMLSPPLSDRFIHRQTTANAVRFTTVELSEMETRILNAGGRALALEKSIFEELRQAVIVAAAELSDCARALAELDVVTALAVLARDEDWCAPKVDDSRAFEISGGRHPVVEAALRASGTPFIRNDCDLSEGAAPIWLLTGPNMAGKSTFLRQNALIAILAQMGSYVPATAARIGLVAQVFSRVGASDDLARGRSTFMVEMVETAAILNQAGDRALVILDEIGRGTATYDGLSIAWATLEHLHGVNRCRALFATHYHEMTGLAAQLSGVENATVAVKEHDGDVIFLHEVRRGAADRSYGVQVAKLAGLPPSVVARAREVLKTLESGERSGGNPAKALLEDLPLFANAAPPPPPAAPTSALEARLADISPDALSPREALDLVYELKSLADRD</sequence>
<organism>
    <name type="scientific">Dinoroseobacter shibae (strain DSM 16493 / NCIMB 14021 / DFL 12)</name>
    <dbReference type="NCBI Taxonomy" id="398580"/>
    <lineage>
        <taxon>Bacteria</taxon>
        <taxon>Pseudomonadati</taxon>
        <taxon>Pseudomonadota</taxon>
        <taxon>Alphaproteobacteria</taxon>
        <taxon>Rhodobacterales</taxon>
        <taxon>Roseobacteraceae</taxon>
        <taxon>Dinoroseobacter</taxon>
    </lineage>
</organism>